<dbReference type="EMBL" id="CP000667">
    <property type="protein sequence ID" value="ABP56356.1"/>
    <property type="molecule type" value="Genomic_DNA"/>
</dbReference>
<dbReference type="RefSeq" id="WP_012015127.1">
    <property type="nucleotide sequence ID" value="NC_009380.1"/>
</dbReference>
<dbReference type="SMR" id="A4XBP9"/>
<dbReference type="STRING" id="369723.Strop_3926"/>
<dbReference type="KEGG" id="stp:Strop_3926"/>
<dbReference type="PATRIC" id="fig|369723.5.peg.4052"/>
<dbReference type="eggNOG" id="COG0480">
    <property type="taxonomic scope" value="Bacteria"/>
</dbReference>
<dbReference type="HOGENOM" id="CLU_002794_4_1_11"/>
<dbReference type="Proteomes" id="UP000000235">
    <property type="component" value="Chromosome"/>
</dbReference>
<dbReference type="GO" id="GO:0005737">
    <property type="term" value="C:cytoplasm"/>
    <property type="evidence" value="ECO:0007669"/>
    <property type="project" value="UniProtKB-SubCell"/>
</dbReference>
<dbReference type="GO" id="GO:0005525">
    <property type="term" value="F:GTP binding"/>
    <property type="evidence" value="ECO:0007669"/>
    <property type="project" value="UniProtKB-UniRule"/>
</dbReference>
<dbReference type="GO" id="GO:0003924">
    <property type="term" value="F:GTPase activity"/>
    <property type="evidence" value="ECO:0007669"/>
    <property type="project" value="InterPro"/>
</dbReference>
<dbReference type="GO" id="GO:0003746">
    <property type="term" value="F:translation elongation factor activity"/>
    <property type="evidence" value="ECO:0007669"/>
    <property type="project" value="UniProtKB-UniRule"/>
</dbReference>
<dbReference type="GO" id="GO:0032790">
    <property type="term" value="P:ribosome disassembly"/>
    <property type="evidence" value="ECO:0007669"/>
    <property type="project" value="TreeGrafter"/>
</dbReference>
<dbReference type="CDD" id="cd01886">
    <property type="entry name" value="EF-G"/>
    <property type="match status" value="1"/>
</dbReference>
<dbReference type="CDD" id="cd16262">
    <property type="entry name" value="EFG_III"/>
    <property type="match status" value="1"/>
</dbReference>
<dbReference type="CDD" id="cd01434">
    <property type="entry name" value="EFG_mtEFG1_IV"/>
    <property type="match status" value="1"/>
</dbReference>
<dbReference type="CDD" id="cd03713">
    <property type="entry name" value="EFG_mtEFG_C"/>
    <property type="match status" value="1"/>
</dbReference>
<dbReference type="CDD" id="cd04088">
    <property type="entry name" value="EFG_mtEFG_II"/>
    <property type="match status" value="1"/>
</dbReference>
<dbReference type="FunFam" id="2.40.30.10:FF:000006">
    <property type="entry name" value="Elongation factor G"/>
    <property type="match status" value="1"/>
</dbReference>
<dbReference type="FunFam" id="3.30.230.10:FF:000003">
    <property type="entry name" value="Elongation factor G"/>
    <property type="match status" value="1"/>
</dbReference>
<dbReference type="FunFam" id="3.30.70.240:FF:000001">
    <property type="entry name" value="Elongation factor G"/>
    <property type="match status" value="1"/>
</dbReference>
<dbReference type="FunFam" id="3.30.70.870:FF:000001">
    <property type="entry name" value="Elongation factor G"/>
    <property type="match status" value="1"/>
</dbReference>
<dbReference type="FunFam" id="3.40.50.300:FF:000029">
    <property type="entry name" value="Elongation factor G"/>
    <property type="match status" value="1"/>
</dbReference>
<dbReference type="Gene3D" id="3.30.230.10">
    <property type="match status" value="1"/>
</dbReference>
<dbReference type="Gene3D" id="3.30.70.240">
    <property type="match status" value="1"/>
</dbReference>
<dbReference type="Gene3D" id="3.30.70.870">
    <property type="entry name" value="Elongation Factor G (Translational Gtpase), domain 3"/>
    <property type="match status" value="1"/>
</dbReference>
<dbReference type="Gene3D" id="3.40.50.300">
    <property type="entry name" value="P-loop containing nucleotide triphosphate hydrolases"/>
    <property type="match status" value="1"/>
</dbReference>
<dbReference type="Gene3D" id="2.40.30.10">
    <property type="entry name" value="Translation factors"/>
    <property type="match status" value="1"/>
</dbReference>
<dbReference type="HAMAP" id="MF_00054_B">
    <property type="entry name" value="EF_G_EF_2_B"/>
    <property type="match status" value="1"/>
</dbReference>
<dbReference type="InterPro" id="IPR053905">
    <property type="entry name" value="EF-G-like_DII"/>
</dbReference>
<dbReference type="InterPro" id="IPR041095">
    <property type="entry name" value="EFG_II"/>
</dbReference>
<dbReference type="InterPro" id="IPR009022">
    <property type="entry name" value="EFG_III"/>
</dbReference>
<dbReference type="InterPro" id="IPR035647">
    <property type="entry name" value="EFG_III/V"/>
</dbReference>
<dbReference type="InterPro" id="IPR047872">
    <property type="entry name" value="EFG_IV"/>
</dbReference>
<dbReference type="InterPro" id="IPR035649">
    <property type="entry name" value="EFG_V"/>
</dbReference>
<dbReference type="InterPro" id="IPR000640">
    <property type="entry name" value="EFG_V-like"/>
</dbReference>
<dbReference type="InterPro" id="IPR031157">
    <property type="entry name" value="G_TR_CS"/>
</dbReference>
<dbReference type="InterPro" id="IPR027417">
    <property type="entry name" value="P-loop_NTPase"/>
</dbReference>
<dbReference type="InterPro" id="IPR020568">
    <property type="entry name" value="Ribosomal_Su5_D2-typ_SF"/>
</dbReference>
<dbReference type="InterPro" id="IPR014721">
    <property type="entry name" value="Ribsml_uS5_D2-typ_fold_subgr"/>
</dbReference>
<dbReference type="InterPro" id="IPR005225">
    <property type="entry name" value="Small_GTP-bd"/>
</dbReference>
<dbReference type="InterPro" id="IPR000795">
    <property type="entry name" value="T_Tr_GTP-bd_dom"/>
</dbReference>
<dbReference type="InterPro" id="IPR009000">
    <property type="entry name" value="Transl_B-barrel_sf"/>
</dbReference>
<dbReference type="InterPro" id="IPR004540">
    <property type="entry name" value="Transl_elong_EFG/EF2"/>
</dbReference>
<dbReference type="InterPro" id="IPR005517">
    <property type="entry name" value="Transl_elong_EFG/EF2_IV"/>
</dbReference>
<dbReference type="NCBIfam" id="TIGR00484">
    <property type="entry name" value="EF-G"/>
    <property type="match status" value="1"/>
</dbReference>
<dbReference type="NCBIfam" id="NF009379">
    <property type="entry name" value="PRK12740.1-3"/>
    <property type="match status" value="1"/>
</dbReference>
<dbReference type="NCBIfam" id="NF009381">
    <property type="entry name" value="PRK12740.1-5"/>
    <property type="match status" value="1"/>
</dbReference>
<dbReference type="NCBIfam" id="TIGR00231">
    <property type="entry name" value="small_GTP"/>
    <property type="match status" value="1"/>
</dbReference>
<dbReference type="PANTHER" id="PTHR43261:SF1">
    <property type="entry name" value="RIBOSOME-RELEASING FACTOR 2, MITOCHONDRIAL"/>
    <property type="match status" value="1"/>
</dbReference>
<dbReference type="PANTHER" id="PTHR43261">
    <property type="entry name" value="TRANSLATION ELONGATION FACTOR G-RELATED"/>
    <property type="match status" value="1"/>
</dbReference>
<dbReference type="Pfam" id="PF22042">
    <property type="entry name" value="EF-G_D2"/>
    <property type="match status" value="1"/>
</dbReference>
<dbReference type="Pfam" id="PF00679">
    <property type="entry name" value="EFG_C"/>
    <property type="match status" value="1"/>
</dbReference>
<dbReference type="Pfam" id="PF14492">
    <property type="entry name" value="EFG_III"/>
    <property type="match status" value="1"/>
</dbReference>
<dbReference type="Pfam" id="PF03764">
    <property type="entry name" value="EFG_IV"/>
    <property type="match status" value="1"/>
</dbReference>
<dbReference type="Pfam" id="PF00009">
    <property type="entry name" value="GTP_EFTU"/>
    <property type="match status" value="1"/>
</dbReference>
<dbReference type="PRINTS" id="PR00315">
    <property type="entry name" value="ELONGATNFCT"/>
</dbReference>
<dbReference type="SMART" id="SM00838">
    <property type="entry name" value="EFG_C"/>
    <property type="match status" value="1"/>
</dbReference>
<dbReference type="SMART" id="SM00889">
    <property type="entry name" value="EFG_IV"/>
    <property type="match status" value="1"/>
</dbReference>
<dbReference type="SUPFAM" id="SSF54980">
    <property type="entry name" value="EF-G C-terminal domain-like"/>
    <property type="match status" value="2"/>
</dbReference>
<dbReference type="SUPFAM" id="SSF52540">
    <property type="entry name" value="P-loop containing nucleoside triphosphate hydrolases"/>
    <property type="match status" value="1"/>
</dbReference>
<dbReference type="SUPFAM" id="SSF54211">
    <property type="entry name" value="Ribosomal protein S5 domain 2-like"/>
    <property type="match status" value="1"/>
</dbReference>
<dbReference type="SUPFAM" id="SSF50447">
    <property type="entry name" value="Translation proteins"/>
    <property type="match status" value="1"/>
</dbReference>
<dbReference type="PROSITE" id="PS00301">
    <property type="entry name" value="G_TR_1"/>
    <property type="match status" value="1"/>
</dbReference>
<dbReference type="PROSITE" id="PS51722">
    <property type="entry name" value="G_TR_2"/>
    <property type="match status" value="1"/>
</dbReference>
<keyword id="KW-0963">Cytoplasm</keyword>
<keyword id="KW-0251">Elongation factor</keyword>
<keyword id="KW-0342">GTP-binding</keyword>
<keyword id="KW-0547">Nucleotide-binding</keyword>
<keyword id="KW-0648">Protein biosynthesis</keyword>
<keyword id="KW-1185">Reference proteome</keyword>
<name>EFG_SALTO</name>
<comment type="function">
    <text evidence="1">Catalyzes the GTP-dependent ribosomal translocation step during translation elongation. During this step, the ribosome changes from the pre-translocational (PRE) to the post-translocational (POST) state as the newly formed A-site-bound peptidyl-tRNA and P-site-bound deacylated tRNA move to the P and E sites, respectively. Catalyzes the coordinated movement of the two tRNA molecules, the mRNA and conformational changes in the ribosome.</text>
</comment>
<comment type="subcellular location">
    <subcellularLocation>
        <location evidence="1">Cytoplasm</location>
    </subcellularLocation>
</comment>
<comment type="similarity">
    <text evidence="1">Belongs to the TRAFAC class translation factor GTPase superfamily. Classic translation factor GTPase family. EF-G/EF-2 subfamily.</text>
</comment>
<sequence>MAAADALANVRNIGIMAHIDAGKTTTTERILFYTGITYKIGEVHEGAAVMDWMAQEQERGITITSAATKCEWKGHTIQIIDTPGHVDFTVEVERSLRVLDGAVAVYDGVAGVEPQTENVWRQADKYNVPRMCFVNKLDRTGADFFRCVQMMVDRLNATPLVLQVPIGLESEHIGVVDLIGMRALTWRGETQKGEDYAVEEIPAELADVATEWREKLMETLADVDDAVMEKYLEGEEFSVEEIKAAIRRATIAGKANPVLCGSAFKNKGVQPMLDAVVDYLPSPLDVPAIEGTATDGETPMLRKPSTSEPFAGLAFKIQTDKHLGKLTYVRVYSGVVETGSQVVNSTKDRKERIGKIYQMHANKREERGSAKAGDIIAVQGLKQTTTGDTLCDPANPVILESMTFPEPVIEVAIEPKTKADQEKLSTAIQRLAEEDPTFRVKLDEETGQTVISGMGELHLDILVDRMRREFNVEANIGMPQVAYRETIRRKVEKVEYTHKKQTGGSGQYARVIISLEPLPLDNEAPTYEFANAVTGGRIPREFIPSVDAGAQDAMQYGILAGFPLVGVKLTLVDGQYHEVDSSEMAFKIAGSMVLKDAARKADPALLEPMMAVEVTTPEENMGDVIGDINSRRGIIQAMEERGGARVVRSLVPLSEMFGYVGDLRSKTQGRASFSMQFDSYAEVPASVAREIIAKATGE</sequence>
<gene>
    <name evidence="1" type="primary">fusA</name>
    <name type="ordered locus">Strop_3926</name>
</gene>
<proteinExistence type="inferred from homology"/>
<protein>
    <recommendedName>
        <fullName evidence="1">Elongation factor G</fullName>
        <shortName evidence="1">EF-G</shortName>
    </recommendedName>
</protein>
<reference key="1">
    <citation type="journal article" date="2007" name="Proc. Natl. Acad. Sci. U.S.A.">
        <title>Genome sequencing reveals complex secondary metabolome in the marine actinomycete Salinispora tropica.</title>
        <authorList>
            <person name="Udwary D.W."/>
            <person name="Zeigler L."/>
            <person name="Asolkar R.N."/>
            <person name="Singan V."/>
            <person name="Lapidus A."/>
            <person name="Fenical W."/>
            <person name="Jensen P.R."/>
            <person name="Moore B.S."/>
        </authorList>
    </citation>
    <scope>NUCLEOTIDE SEQUENCE [LARGE SCALE GENOMIC DNA]</scope>
    <source>
        <strain>ATCC BAA-916 / DSM 44818 / JCM 13857 / NBRC 105044 / CNB-440</strain>
    </source>
</reference>
<organism>
    <name type="scientific">Salinispora tropica (strain ATCC BAA-916 / DSM 44818 / JCM 13857 / NBRC 105044 / CNB-440)</name>
    <dbReference type="NCBI Taxonomy" id="369723"/>
    <lineage>
        <taxon>Bacteria</taxon>
        <taxon>Bacillati</taxon>
        <taxon>Actinomycetota</taxon>
        <taxon>Actinomycetes</taxon>
        <taxon>Micromonosporales</taxon>
        <taxon>Micromonosporaceae</taxon>
        <taxon>Salinispora</taxon>
    </lineage>
</organism>
<feature type="chain" id="PRO_0000335855" description="Elongation factor G">
    <location>
        <begin position="1"/>
        <end position="698"/>
    </location>
</feature>
<feature type="domain" description="tr-type G">
    <location>
        <begin position="8"/>
        <end position="284"/>
    </location>
</feature>
<feature type="binding site" evidence="1">
    <location>
        <begin position="17"/>
        <end position="24"/>
    </location>
    <ligand>
        <name>GTP</name>
        <dbReference type="ChEBI" id="CHEBI:37565"/>
    </ligand>
</feature>
<feature type="binding site" evidence="1">
    <location>
        <begin position="81"/>
        <end position="85"/>
    </location>
    <ligand>
        <name>GTP</name>
        <dbReference type="ChEBI" id="CHEBI:37565"/>
    </ligand>
</feature>
<feature type="binding site" evidence="1">
    <location>
        <begin position="135"/>
        <end position="138"/>
    </location>
    <ligand>
        <name>GTP</name>
        <dbReference type="ChEBI" id="CHEBI:37565"/>
    </ligand>
</feature>
<accession>A4XBP9</accession>
<evidence type="ECO:0000255" key="1">
    <source>
        <dbReference type="HAMAP-Rule" id="MF_00054"/>
    </source>
</evidence>